<comment type="function">
    <text evidence="4 5 7">Alpha subunit of nicotinic acetylcholine receptor (nAChR) (PubMed:15280391, PubMed:15990870, PubMed:20027209). Probably acts in cholinergic motoneurons to regulate presynaptic neurotransmitter release, thereby ensuring normal level of excitation of cholinergic motoneurons during locomotion (PubMed:20027209). Involved in nAChR sensitivity to nicotine and levamisole (PubMed:15280391, PubMed:15990870).</text>
</comment>
<comment type="subunit">
    <text evidence="5 7 8">Component of nicotinic acetylcholine receptor (PubMed:15990870, PubMed:20027209). In muscles, composed of 2 non-alpha subunits lev-1 and unc-29, and 3 alpha subunits unc-38, unc-63 and lev-8 (PubMed:15990870). In cholinergic motoneurons, composed of 2 non-alpha subunits acr-2 and acr-3, and 3 alpha subunits unc-38, unc-63 and acr-12 (PubMed:20027209). Interacts with lev-10 (PubMed:21252855).</text>
</comment>
<comment type="subcellular location">
    <subcellularLocation>
        <location evidence="2">Postsynaptic cell membrane</location>
        <topology evidence="3">Multi-pass membrane protein</topology>
    </subcellularLocation>
    <subcellularLocation>
        <location evidence="2">Cell membrane</location>
        <topology evidence="3">Multi-pass membrane protein</topology>
    </subcellularLocation>
</comment>
<comment type="tissue specificity">
    <text evidence="4">Expressed in body wall muscles, in vulval muscles and in neurons.</text>
</comment>
<comment type="disruption phenotype">
    <text evidence="5">RNAi-mediated knockdown causes a resistance to nicotine-mediated paralysis.</text>
</comment>
<comment type="similarity">
    <text evidence="9">Belongs to the ligand-gated ion channel (TC 1.A.9) family. Acetylcholine receptor (TC 1.A.9.1) subfamily.</text>
</comment>
<keyword id="KW-1003">Cell membrane</keyword>
<keyword id="KW-1015">Disulfide bond</keyword>
<keyword id="KW-0325">Glycoprotein</keyword>
<keyword id="KW-0407">Ion channel</keyword>
<keyword id="KW-0406">Ion transport</keyword>
<keyword id="KW-1071">Ligand-gated ion channel</keyword>
<keyword id="KW-0472">Membrane</keyword>
<keyword id="KW-0628">Postsynaptic cell membrane</keyword>
<keyword id="KW-0675">Receptor</keyword>
<keyword id="KW-1185">Reference proteome</keyword>
<keyword id="KW-0732">Signal</keyword>
<keyword id="KW-0770">Synapse</keyword>
<keyword id="KW-0812">Transmembrane</keyword>
<keyword id="KW-1133">Transmembrane helix</keyword>
<keyword id="KW-0813">Transport</keyword>
<evidence type="ECO:0000250" key="1"/>
<evidence type="ECO:0000250" key="2">
    <source>
        <dbReference type="UniProtKB" id="Q27218"/>
    </source>
</evidence>
<evidence type="ECO:0000255" key="3"/>
<evidence type="ECO:0000269" key="4">
    <source>
    </source>
</evidence>
<evidence type="ECO:0000269" key="5">
    <source>
    </source>
</evidence>
<evidence type="ECO:0000269" key="6">
    <source>
    </source>
</evidence>
<evidence type="ECO:0000269" key="7">
    <source>
    </source>
</evidence>
<evidence type="ECO:0000269" key="8">
    <source>
    </source>
</evidence>
<evidence type="ECO:0000305" key="9"/>
<organism>
    <name type="scientific">Caenorhabditis elegans</name>
    <dbReference type="NCBI Taxonomy" id="6239"/>
    <lineage>
        <taxon>Eukaryota</taxon>
        <taxon>Metazoa</taxon>
        <taxon>Ecdysozoa</taxon>
        <taxon>Nematoda</taxon>
        <taxon>Chromadorea</taxon>
        <taxon>Rhabditida</taxon>
        <taxon>Rhabditina</taxon>
        <taxon>Rhabditomorpha</taxon>
        <taxon>Rhabditoidea</taxon>
        <taxon>Rhabditidae</taxon>
        <taxon>Peloderinae</taxon>
        <taxon>Caenorhabditis</taxon>
    </lineage>
</organism>
<gene>
    <name type="primary">unc-63</name>
    <name type="synonym">lev-7</name>
    <name type="ORF">Y110A7A.3</name>
</gene>
<proteinExistence type="evidence at protein level"/>
<reference key="1">
    <citation type="journal article" date="2004" name="J. Biol. Chem.">
        <title>The Caenorhabditis elegans unc-63 gene encodes a levamisole-sensitive nicotinic acetylcholine receptor alpha subunit.</title>
        <authorList>
            <person name="Culetto E."/>
            <person name="Baylis H.A."/>
            <person name="Richmond J.E."/>
            <person name="Jones A.K."/>
            <person name="Fleming J.T."/>
            <person name="Squire M.D."/>
            <person name="Lewis J.A."/>
            <person name="Sattelle D.B."/>
        </authorList>
    </citation>
    <scope>NUCLEOTIDE SEQUENCE [MRNA]</scope>
    <scope>FUNCTION</scope>
    <scope>TISSUE SPECIFICITY</scope>
</reference>
<reference key="2">
    <citation type="journal article" date="1998" name="Science">
        <title>Genome sequence of the nematode C. elegans: a platform for investigating biology.</title>
        <authorList>
            <consortium name="The C. elegans sequencing consortium"/>
        </authorList>
    </citation>
    <scope>NUCLEOTIDE SEQUENCE [LARGE SCALE GENOMIC DNA]</scope>
    <source>
        <strain>Bristol N2</strain>
    </source>
</reference>
<reference key="3">
    <citation type="journal article" date="2005" name="EMBO J.">
        <title>Identification and characterization of novel nicotinic receptor-associated proteins in Caenorhabditis elegans.</title>
        <authorList>
            <person name="Gottschalk A."/>
            <person name="Almedom R.B."/>
            <person name="Schedletzky T."/>
            <person name="Anderson S.D."/>
            <person name="Yates J.R. III"/>
            <person name="Schafer W.R."/>
        </authorList>
    </citation>
    <scope>FUNCTION</scope>
    <scope>INTERACTION WITH NICOTINIC ACETYLCHOLINE RECEPTOR</scope>
    <scope>DISRUPTION PHENOTYPE</scope>
</reference>
<reference key="4">
    <citation type="journal article" date="2007" name="Mol. Cell. Proteomics">
        <title>Proteomics reveals N-linked glycoprotein diversity in Caenorhabditis elegans and suggests an atypical translocation mechanism for integral membrane proteins.</title>
        <authorList>
            <person name="Kaji H."/>
            <person name="Kamiie J."/>
            <person name="Kawakami H."/>
            <person name="Kido K."/>
            <person name="Yamauchi Y."/>
            <person name="Shinkawa T."/>
            <person name="Taoka M."/>
            <person name="Takahashi N."/>
            <person name="Isobe T."/>
        </authorList>
    </citation>
    <scope>GLYCOSYLATION [LARGE SCALE ANALYSIS] AT ASN-136</scope>
    <scope>IDENTIFICATION BY MASS SPECTROMETRY</scope>
    <source>
        <strain>Bristol N2</strain>
    </source>
</reference>
<reference key="5">
    <citation type="journal article" date="2009" name="PLoS Biol.">
        <title>A neuronal acetylcholine receptor regulates the balance of muscle excitation and inhibition in Caenorhabditis elegans.</title>
        <authorList>
            <person name="Jospin M."/>
            <person name="Qi Y.B."/>
            <person name="Stawicki T.M."/>
            <person name="Boulin T."/>
            <person name="Schuske K.R."/>
            <person name="Horvitz H.R."/>
            <person name="Bessereau J.L."/>
            <person name="Jorgensen E.M."/>
            <person name="Jin Y."/>
        </authorList>
    </citation>
    <scope>FUNCTION</scope>
    <scope>INTERACTION WITH NICOTINIC ACETYLCHOLINE RECEPTOR</scope>
</reference>
<reference key="6">
    <citation type="journal article" date="2011" name="EMBO J.">
        <title>A single immunoglobulin-domain protein required for clustering acetylcholine receptors in C. elegans.</title>
        <authorList>
            <person name="Rapti G."/>
            <person name="Richmond J."/>
            <person name="Bessereau J.L."/>
        </authorList>
    </citation>
    <scope>INTERACTION WITH LEV-10</scope>
</reference>
<protein>
    <recommendedName>
        <fullName>Acetylcholine receptor subunit alpha-type unc-63</fullName>
    </recommendedName>
    <alternativeName>
        <fullName>Levamisole-resistant protein 7</fullName>
    </alternativeName>
    <alternativeName>
        <fullName>Uncoordinated protein 63</fullName>
    </alternativeName>
</protein>
<sequence length="502" mass="57391">MGPNDHGFAYILIFLLLSPPTHANRDANRLFEDLIADYNKLVRPVSENGETLVVTFKLKLSQLLDVHEKNQIMTTNVWLQHSWMDYKLRWDPVEYGGVEVLYVPSDTIWLPDVVLYNNADGNYQVTIMTKAKLTYNGTVEWAPPAIYKSMCQIDVEFFPFDRQQCEMKFGSWTYGGLEVDLQHRDKHLEKEIEEDVEGVDGPTKEIVWVVDRGIDLSDYYPSVEWDILNVPGKRHSKRYPCCESPFIDITYEIHLRRKTLFYTVNLIFPSVGISFLTALVFYLPSDGGEKISLCISILISLTVFFLLLVEIIPSTSLVIPLIGKYLLFTMVLVTLSVVVTVVTLNVHYRSPTTHTMPKWMKRLFVDFLPKYLLMTRPQPPGHHSKPNRKFDSRASTFSIGVNHVLGQNSELLSPGLNSNREESSFTLPRDNSPVRSAVESVAYIADHLKNEEDDKQVIEDWKYISVVMDRIFLITFTFACAFGTVVIIARAPSIYDNTPALA</sequence>
<accession>Q9N587</accession>
<accession>Q964N6</accession>
<dbReference type="EMBL" id="AF288374">
    <property type="protein sequence ID" value="AAK83056.1"/>
    <property type="molecule type" value="mRNA"/>
</dbReference>
<dbReference type="EMBL" id="FO080728">
    <property type="protein sequence ID" value="CCD66192.1"/>
    <property type="molecule type" value="Genomic_DNA"/>
</dbReference>
<dbReference type="RefSeq" id="NP_491533.2">
    <property type="nucleotide sequence ID" value="NM_059132.4"/>
</dbReference>
<dbReference type="SMR" id="Q9N587"/>
<dbReference type="BioGRID" id="37611">
    <property type="interactions" value="3"/>
</dbReference>
<dbReference type="DIP" id="DIP-42343N"/>
<dbReference type="FunCoup" id="Q9N587">
    <property type="interactions" value="78"/>
</dbReference>
<dbReference type="IntAct" id="Q9N587">
    <property type="interactions" value="1"/>
</dbReference>
<dbReference type="MINT" id="Q9N587"/>
<dbReference type="STRING" id="6239.Y110A7A.3.1"/>
<dbReference type="DrugBank" id="DB00848">
    <property type="generic name" value="Levamisole"/>
</dbReference>
<dbReference type="DrugCentral" id="Q9N587"/>
<dbReference type="TCDB" id="1.A.9.1.13">
    <property type="family name" value="the neurotransmitter receptor, cys loop, ligand-gated ion channel (lic) family"/>
</dbReference>
<dbReference type="GlyCosmos" id="Q9N587">
    <property type="glycosylation" value="1 site, No reported glycans"/>
</dbReference>
<dbReference type="iPTMnet" id="Q9N587"/>
<dbReference type="PaxDb" id="6239-Y110A7A.3"/>
<dbReference type="EnsemblMetazoa" id="Y110A7A.3.1">
    <property type="protein sequence ID" value="Y110A7A.3.1"/>
    <property type="gene ID" value="WBGene00006797"/>
</dbReference>
<dbReference type="GeneID" id="172150"/>
<dbReference type="KEGG" id="cel:CELE_Y110A7A.3"/>
<dbReference type="UCSC" id="Y110A7A.3">
    <property type="organism name" value="c. elegans"/>
</dbReference>
<dbReference type="AGR" id="WB:WBGene00006797"/>
<dbReference type="CTD" id="172150"/>
<dbReference type="WormBase" id="Y110A7A.3">
    <property type="protein sequence ID" value="CE30706"/>
    <property type="gene ID" value="WBGene00006797"/>
    <property type="gene designation" value="unc-63"/>
</dbReference>
<dbReference type="eggNOG" id="KOG3645">
    <property type="taxonomic scope" value="Eukaryota"/>
</dbReference>
<dbReference type="GeneTree" id="ENSGT00940000166039"/>
<dbReference type="HOGENOM" id="CLU_018074_1_0_1"/>
<dbReference type="InParanoid" id="Q9N587"/>
<dbReference type="OMA" id="CWILINS"/>
<dbReference type="OrthoDB" id="5975154at2759"/>
<dbReference type="PhylomeDB" id="Q9N587"/>
<dbReference type="Reactome" id="R-CEL-629587">
    <property type="pathway name" value="Highly sodium permeable postsynaptic acetylcholine nicotinic receptors"/>
</dbReference>
<dbReference type="Reactome" id="R-CEL-629594">
    <property type="pathway name" value="Highly calcium permeable postsynaptic nicotinic acetylcholine receptors"/>
</dbReference>
<dbReference type="Reactome" id="R-CEL-629597">
    <property type="pathway name" value="Highly calcium permeable nicotinic acetylcholine receptors"/>
</dbReference>
<dbReference type="Reactome" id="R-CEL-6798695">
    <property type="pathway name" value="Neutrophil degranulation"/>
</dbReference>
<dbReference type="PRO" id="PR:Q9N587"/>
<dbReference type="Proteomes" id="UP000001940">
    <property type="component" value="Chromosome I"/>
</dbReference>
<dbReference type="Bgee" id="WBGene00006797">
    <property type="expression patterns" value="Expressed in pharyngeal muscle cell (C elegans) and 3 other cell types or tissues"/>
</dbReference>
<dbReference type="GO" id="GO:0005892">
    <property type="term" value="C:acetylcholine-gated channel complex"/>
    <property type="evidence" value="ECO:0000318"/>
    <property type="project" value="GO_Central"/>
</dbReference>
<dbReference type="GO" id="GO:0031594">
    <property type="term" value="C:neuromuscular junction"/>
    <property type="evidence" value="ECO:0000314"/>
    <property type="project" value="WormBase"/>
</dbReference>
<dbReference type="GO" id="GO:0043005">
    <property type="term" value="C:neuron projection"/>
    <property type="evidence" value="ECO:0000318"/>
    <property type="project" value="GO_Central"/>
</dbReference>
<dbReference type="GO" id="GO:0005886">
    <property type="term" value="C:plasma membrane"/>
    <property type="evidence" value="ECO:0000314"/>
    <property type="project" value="WormBase"/>
</dbReference>
<dbReference type="GO" id="GO:0045211">
    <property type="term" value="C:postsynaptic membrane"/>
    <property type="evidence" value="ECO:0000314"/>
    <property type="project" value="WormBase"/>
</dbReference>
<dbReference type="GO" id="GO:0045202">
    <property type="term" value="C:synapse"/>
    <property type="evidence" value="ECO:0000318"/>
    <property type="project" value="GO_Central"/>
</dbReference>
<dbReference type="GO" id="GO:0022848">
    <property type="term" value="F:acetylcholine-gated monoatomic cation-selective channel activity"/>
    <property type="evidence" value="ECO:0000314"/>
    <property type="project" value="WormBase"/>
</dbReference>
<dbReference type="GO" id="GO:0004888">
    <property type="term" value="F:transmembrane signaling receptor activity"/>
    <property type="evidence" value="ECO:0007669"/>
    <property type="project" value="InterPro"/>
</dbReference>
<dbReference type="GO" id="GO:0098703">
    <property type="term" value="P:calcium ion import across plasma membrane"/>
    <property type="evidence" value="ECO:0000314"/>
    <property type="project" value="WormBase"/>
</dbReference>
<dbReference type="GO" id="GO:0007268">
    <property type="term" value="P:chemical synaptic transmission"/>
    <property type="evidence" value="ECO:0000318"/>
    <property type="project" value="GO_Central"/>
</dbReference>
<dbReference type="GO" id="GO:0040011">
    <property type="term" value="P:locomotion"/>
    <property type="evidence" value="ECO:0000315"/>
    <property type="project" value="WormBase"/>
</dbReference>
<dbReference type="GO" id="GO:0034220">
    <property type="term" value="P:monoatomic ion transmembrane transport"/>
    <property type="evidence" value="ECO:0000315"/>
    <property type="project" value="WormBase"/>
</dbReference>
<dbReference type="GO" id="GO:0090326">
    <property type="term" value="P:positive regulation of locomotion involved in locomotory behavior"/>
    <property type="evidence" value="ECO:0000315"/>
    <property type="project" value="UniProtKB"/>
</dbReference>
<dbReference type="GO" id="GO:0009791">
    <property type="term" value="P:post-embryonic development"/>
    <property type="evidence" value="ECO:0000315"/>
    <property type="project" value="WormBase"/>
</dbReference>
<dbReference type="GO" id="GO:0046662">
    <property type="term" value="P:regulation of egg-laying behavior"/>
    <property type="evidence" value="ECO:0000315"/>
    <property type="project" value="WormBase"/>
</dbReference>
<dbReference type="GO" id="GO:0040012">
    <property type="term" value="P:regulation of locomotion"/>
    <property type="evidence" value="ECO:0000315"/>
    <property type="project" value="WormBase"/>
</dbReference>
<dbReference type="GO" id="GO:0042391">
    <property type="term" value="P:regulation of membrane potential"/>
    <property type="evidence" value="ECO:0000318"/>
    <property type="project" value="GO_Central"/>
</dbReference>
<dbReference type="GO" id="GO:0006937">
    <property type="term" value="P:regulation of muscle contraction"/>
    <property type="evidence" value="ECO:0000316"/>
    <property type="project" value="UniProtKB"/>
</dbReference>
<dbReference type="GO" id="GO:0007271">
    <property type="term" value="P:synaptic transmission, cholinergic"/>
    <property type="evidence" value="ECO:0000315"/>
    <property type="project" value="WormBase"/>
</dbReference>
<dbReference type="CDD" id="cd19031">
    <property type="entry name" value="LGIC_ECD_nAChR_proto_alpha-like"/>
    <property type="match status" value="1"/>
</dbReference>
<dbReference type="CDD" id="cd19064">
    <property type="entry name" value="LGIC_TM_nAChR"/>
    <property type="match status" value="1"/>
</dbReference>
<dbReference type="FunFam" id="1.20.58.390:FF:000066">
    <property type="entry name" value="Acetylcholine receptor subunit alpha-type unc-63"/>
    <property type="match status" value="1"/>
</dbReference>
<dbReference type="FunFam" id="2.70.170.10:FF:000080">
    <property type="entry name" value="Acetylcholine receptor subunit alpha-type unc-63"/>
    <property type="match status" value="1"/>
</dbReference>
<dbReference type="FunFam" id="1.20.58.390:FF:000022">
    <property type="entry name" value="Nicotinic acetylcholine receptor subunit alpha4"/>
    <property type="match status" value="1"/>
</dbReference>
<dbReference type="Gene3D" id="2.70.170.10">
    <property type="entry name" value="Neurotransmitter-gated ion-channel ligand-binding domain"/>
    <property type="match status" value="1"/>
</dbReference>
<dbReference type="Gene3D" id="1.20.58.390">
    <property type="entry name" value="Neurotransmitter-gated ion-channel transmembrane domain"/>
    <property type="match status" value="2"/>
</dbReference>
<dbReference type="InterPro" id="IPR006202">
    <property type="entry name" value="Neur_chan_lig-bd"/>
</dbReference>
<dbReference type="InterPro" id="IPR036734">
    <property type="entry name" value="Neur_chan_lig-bd_sf"/>
</dbReference>
<dbReference type="InterPro" id="IPR006201">
    <property type="entry name" value="Neur_channel"/>
</dbReference>
<dbReference type="InterPro" id="IPR036719">
    <property type="entry name" value="Neuro-gated_channel_TM_sf"/>
</dbReference>
<dbReference type="InterPro" id="IPR038050">
    <property type="entry name" value="Neuro_actylchol_rec"/>
</dbReference>
<dbReference type="InterPro" id="IPR006029">
    <property type="entry name" value="Neurotrans-gated_channel_TM"/>
</dbReference>
<dbReference type="InterPro" id="IPR018000">
    <property type="entry name" value="Neurotransmitter_ion_chnl_CS"/>
</dbReference>
<dbReference type="InterPro" id="IPR002394">
    <property type="entry name" value="Nicotinic_acetylcholine_rcpt"/>
</dbReference>
<dbReference type="NCBIfam" id="TIGR00860">
    <property type="entry name" value="LIC"/>
    <property type="match status" value="1"/>
</dbReference>
<dbReference type="PANTHER" id="PTHR18945">
    <property type="entry name" value="NEUROTRANSMITTER GATED ION CHANNEL"/>
    <property type="match status" value="1"/>
</dbReference>
<dbReference type="Pfam" id="PF02931">
    <property type="entry name" value="Neur_chan_LBD"/>
    <property type="match status" value="1"/>
</dbReference>
<dbReference type="Pfam" id="PF02932">
    <property type="entry name" value="Neur_chan_memb"/>
    <property type="match status" value="1"/>
</dbReference>
<dbReference type="PRINTS" id="PR00254">
    <property type="entry name" value="NICOTINICR"/>
</dbReference>
<dbReference type="PRINTS" id="PR00252">
    <property type="entry name" value="NRIONCHANNEL"/>
</dbReference>
<dbReference type="SUPFAM" id="SSF90112">
    <property type="entry name" value="Neurotransmitter-gated ion-channel transmembrane pore"/>
    <property type="match status" value="1"/>
</dbReference>
<dbReference type="SUPFAM" id="SSF63712">
    <property type="entry name" value="Nicotinic receptor ligand binding domain-like"/>
    <property type="match status" value="1"/>
</dbReference>
<dbReference type="PROSITE" id="PS00236">
    <property type="entry name" value="NEUROTR_ION_CHANNEL"/>
    <property type="match status" value="1"/>
</dbReference>
<name>ACH6_CAEEL</name>
<feature type="signal peptide" evidence="3">
    <location>
        <begin position="1"/>
        <end position="23"/>
    </location>
</feature>
<feature type="chain" id="PRO_0000255715" description="Acetylcholine receptor subunit alpha-type unc-63">
    <location>
        <begin position="24"/>
        <end position="502"/>
    </location>
</feature>
<feature type="topological domain" description="Extracellular" evidence="3">
    <location>
        <begin position="24"/>
        <end position="263"/>
    </location>
</feature>
<feature type="transmembrane region" description="Helical" evidence="3">
    <location>
        <begin position="264"/>
        <end position="284"/>
    </location>
</feature>
<feature type="transmembrane region" description="Helical" evidence="3">
    <location>
        <begin position="293"/>
        <end position="313"/>
    </location>
</feature>
<feature type="transmembrane region" description="Helical" evidence="3">
    <location>
        <begin position="326"/>
        <end position="346"/>
    </location>
</feature>
<feature type="topological domain" description="Cytoplasmic" evidence="3">
    <location>
        <begin position="347"/>
        <end position="470"/>
    </location>
</feature>
<feature type="transmembrane region" description="Helical" evidence="3">
    <location>
        <begin position="471"/>
        <end position="491"/>
    </location>
</feature>
<feature type="glycosylation site" description="N-linked (GlcNAc...) asparagine" evidence="6">
    <location>
        <position position="136"/>
    </location>
</feature>
<feature type="disulfide bond" evidence="1">
    <location>
        <begin position="151"/>
        <end position="165"/>
    </location>
</feature>